<protein>
    <recommendedName>
        <fullName>DNA-directed RNA polymerase 18 kDa subunit</fullName>
        <ecNumber>2.7.7.6</ecNumber>
    </recommendedName>
</protein>
<name>RP18_VARV</name>
<organismHost>
    <name type="scientific">Homo sapiens</name>
    <name type="common">Human</name>
    <dbReference type="NCBI Taxonomy" id="9606"/>
</organismHost>
<evidence type="ECO:0000250" key="1">
    <source>
        <dbReference type="UniProtKB" id="P04310"/>
    </source>
</evidence>
<evidence type="ECO:0000250" key="2">
    <source>
        <dbReference type="UniProtKB" id="Q76ZS0"/>
    </source>
</evidence>
<evidence type="ECO:0000305" key="3"/>
<dbReference type="EC" id="2.7.7.6"/>
<dbReference type="EMBL" id="L22579">
    <property type="protein sequence ID" value="AAA60845.1"/>
    <property type="molecule type" value="Genomic_DNA"/>
</dbReference>
<dbReference type="PIR" id="T28535">
    <property type="entry name" value="T28535"/>
</dbReference>
<dbReference type="RefSeq" id="NP_042141.1">
    <property type="nucleotide sequence ID" value="NC_001611.1"/>
</dbReference>
<dbReference type="SMR" id="P0DSY0"/>
<dbReference type="GeneID" id="1486423"/>
<dbReference type="KEGG" id="vg:1486423"/>
<dbReference type="Proteomes" id="UP000119805">
    <property type="component" value="Segment"/>
</dbReference>
<dbReference type="GO" id="GO:0000428">
    <property type="term" value="C:DNA-directed RNA polymerase complex"/>
    <property type="evidence" value="ECO:0007669"/>
    <property type="project" value="UniProtKB-KW"/>
</dbReference>
<dbReference type="GO" id="GO:0044423">
    <property type="term" value="C:virion component"/>
    <property type="evidence" value="ECO:0007669"/>
    <property type="project" value="UniProtKB-KW"/>
</dbReference>
<dbReference type="GO" id="GO:0003677">
    <property type="term" value="F:DNA binding"/>
    <property type="evidence" value="ECO:0007669"/>
    <property type="project" value="InterPro"/>
</dbReference>
<dbReference type="GO" id="GO:0003899">
    <property type="term" value="F:DNA-directed RNA polymerase activity"/>
    <property type="evidence" value="ECO:0007669"/>
    <property type="project" value="UniProtKB-EC"/>
</dbReference>
<dbReference type="GO" id="GO:0019083">
    <property type="term" value="P:viral transcription"/>
    <property type="evidence" value="ECO:0007669"/>
    <property type="project" value="InterPro"/>
</dbReference>
<dbReference type="InterPro" id="IPR004973">
    <property type="entry name" value="DNA-dir_RNA_pol_18kDa_poxviral"/>
</dbReference>
<dbReference type="Pfam" id="PF03293">
    <property type="entry name" value="Pox_RNA_pol"/>
    <property type="match status" value="1"/>
</dbReference>
<sequence>MSSFVTNGYLPVTLEPHELTLDIKTNIRNAVYKTYLHKEISGKMAKKIEICKDVELPLGEIVNNSVVINVPCVITYAYYHVGDIVRGTLNIEDESNVTIQCGDLICKLSRDSGTVSFSDSKYCFFRNGNAYDNGSEVSAVLMEAQQGTESSFVFLANIVDS</sequence>
<proteinExistence type="evidence at transcript level"/>
<gene>
    <name type="primary">OPG119</name>
    <name type="synonym">RPO18</name>
    <name type="ORF">D7R</name>
    <name type="ORF">F7R</name>
</gene>
<accession>P0DSY0</accession>
<accession>P33058</accession>
<keyword id="KW-0240">DNA-directed RNA polymerase</keyword>
<keyword id="KW-0244">Early protein</keyword>
<keyword id="KW-0548">Nucleotidyltransferase</keyword>
<keyword id="KW-0804">Transcription</keyword>
<keyword id="KW-0808">Transferase</keyword>
<keyword id="KW-0946">Virion</keyword>
<organism>
    <name type="scientific">Variola virus</name>
    <dbReference type="NCBI Taxonomy" id="10255"/>
    <lineage>
        <taxon>Viruses</taxon>
        <taxon>Varidnaviria</taxon>
        <taxon>Bamfordvirae</taxon>
        <taxon>Nucleocytoviricota</taxon>
        <taxon>Pokkesviricetes</taxon>
        <taxon>Chitovirales</taxon>
        <taxon>Poxviridae</taxon>
        <taxon>Chordopoxvirinae</taxon>
        <taxon>Orthopoxvirus</taxon>
    </lineage>
</organism>
<feature type="chain" id="PRO_0000448136" description="DNA-directed RNA polymerase 18 kDa subunit">
    <location>
        <begin position="1"/>
        <end position="161"/>
    </location>
</feature>
<comment type="function">
    <text evidence="1">Part of the DNA-dependent RNA polymerase which catalyzes the transcription of viral DNA into RNA using the four ribonucleoside triphosphates as substrates. Responsible for the transcription of early, intermediate and late genes. DNA-dependent RNA polymerase associates with the early transcription factor (ETF), itself composed of OPG118 and OPG133, thereby allowing the early genes transcription. Late transcription, and probably also intermediate transcription, require newly synthesized RNA polymerase.</text>
</comment>
<comment type="catalytic activity">
    <reaction evidence="1">
        <text>RNA(n) + a ribonucleoside 5'-triphosphate = RNA(n+1) + diphosphate</text>
        <dbReference type="Rhea" id="RHEA:21248"/>
        <dbReference type="Rhea" id="RHEA-COMP:14527"/>
        <dbReference type="Rhea" id="RHEA-COMP:17342"/>
        <dbReference type="ChEBI" id="CHEBI:33019"/>
        <dbReference type="ChEBI" id="CHEBI:61557"/>
        <dbReference type="ChEBI" id="CHEBI:140395"/>
        <dbReference type="EC" id="2.7.7.6"/>
    </reaction>
</comment>
<comment type="subunit">
    <text evidence="2">The DNA-dependent RNA polymerase used for intermediate and late genes expression consists of eight subunits Rpo30/OPG66, Rpo7/OPG90, Rpo22/OPG103, Rpo147/OPG105, Rpo18/OPG119, Rpo19/OPG131, Rpo132/OPG151 and Rpo35/OPG156. The same holoenzyme, with the addition of the transcription-specificity factor OPG109, is used for early gene expression.</text>
</comment>
<comment type="subcellular location">
    <subcellularLocation>
        <location evidence="1">Virion</location>
    </subcellularLocation>
    <text evidence="1">All the enzymes and other proteins required to synthesize early mRNAs are packaged within the virion core along with the DNA genome. This is necessary because viral early mRNAs are synthesized within minutes after virus entry into the cell and are extruded through pores in the core particle.</text>
</comment>
<comment type="induction">
    <text>Expressed in the early phase of the viral replicative cycle.</text>
</comment>
<comment type="similarity">
    <text evidence="3">Belongs to the poxviridae DNA-directed RNA polymerase 18 kDa subunit family.</text>
</comment>
<reference key="1">
    <citation type="journal article" date="1993" name="Nature">
        <title>Potential virulence determinants in terminal regions of variola smallpox virus genome.</title>
        <authorList>
            <person name="Massung R.F."/>
            <person name="Esposito J.J."/>
            <person name="Liu L.I."/>
            <person name="Qi J."/>
            <person name="Utterback T.R."/>
            <person name="Knight J.C."/>
            <person name="Aubin L."/>
            <person name="Yuran T.E."/>
            <person name="Parsons J.M."/>
            <person name="Loparev V.N."/>
            <person name="Selivanov N.A."/>
            <person name="Cavallaro K.F."/>
            <person name="Kerlavage A.R."/>
            <person name="Mahy B.W.J."/>
            <person name="Venter J.C."/>
        </authorList>
    </citation>
    <scope>NUCLEOTIDE SEQUENCE [GENOMIC DNA]</scope>
    <source>
        <strain>Bangladesh-1975</strain>
    </source>
</reference>